<feature type="signal peptide" evidence="2">
    <location>
        <begin position="1"/>
        <end position="22"/>
    </location>
</feature>
<feature type="propeptide" id="PRO_0000447362" description="Activation peptide" evidence="1">
    <location>
        <begin position="23"/>
        <end position="64"/>
    </location>
</feature>
<feature type="chain" id="PRO_5015019728" description="Cathepsin Z-1" evidence="2">
    <location>
        <begin position="65"/>
        <end position="306"/>
    </location>
</feature>
<feature type="active site" evidence="1">
    <location>
        <position position="95"/>
    </location>
</feature>
<feature type="active site" evidence="1">
    <location>
        <position position="243"/>
    </location>
</feature>
<feature type="active site" evidence="1">
    <location>
        <position position="265"/>
    </location>
</feature>
<feature type="glycosylation site" description="N-linked (GlcNAc...) asparagine" evidence="3">
    <location>
        <position position="187"/>
    </location>
</feature>
<feature type="disulfide bond" evidence="1">
    <location>
        <begin position="38"/>
        <end position="95"/>
    </location>
</feature>
<feature type="disulfide bond" evidence="1">
    <location>
        <begin position="92"/>
        <end position="135"/>
    </location>
</feature>
<feature type="disulfide bond" evidence="1">
    <location>
        <begin position="129"/>
        <end position="168"/>
    </location>
</feature>
<feature type="disulfide bond" evidence="1">
    <location>
        <begin position="158"/>
        <end position="174"/>
    </location>
</feature>
<feature type="disulfide bond" evidence="1">
    <location>
        <begin position="177"/>
        <end position="182"/>
    </location>
</feature>
<feature type="disulfide bond" evidence="1">
    <location>
        <begin position="217"/>
        <end position="299"/>
    </location>
</feature>
<feature type="splice variant" id="VSP_060183" description="In isoform b." evidence="8">
    <location>
        <begin position="1"/>
        <end position="136"/>
    </location>
</feature>
<organism evidence="10">
    <name type="scientific">Caenorhabditis elegans</name>
    <dbReference type="NCBI Taxonomy" id="6239"/>
    <lineage>
        <taxon>Eukaryota</taxon>
        <taxon>Metazoa</taxon>
        <taxon>Ecdysozoa</taxon>
        <taxon>Nematoda</taxon>
        <taxon>Chromadorea</taxon>
        <taxon>Rhabditida</taxon>
        <taxon>Rhabditina</taxon>
        <taxon>Rhabditomorpha</taxon>
        <taxon>Rhabditoidea</taxon>
        <taxon>Rhabditidae</taxon>
        <taxon>Peloderinae</taxon>
        <taxon>Caenorhabditis</taxon>
    </lineage>
</organism>
<name>CATZ1_CAEEL</name>
<evidence type="ECO:0000250" key="1">
    <source>
        <dbReference type="UniProtKB" id="Q9UBR2"/>
    </source>
</evidence>
<evidence type="ECO:0000255" key="2"/>
<evidence type="ECO:0000255" key="3">
    <source>
        <dbReference type="PROSITE-ProRule" id="PRU00498"/>
    </source>
</evidence>
<evidence type="ECO:0000255" key="4">
    <source>
        <dbReference type="RuleBase" id="RU362133"/>
    </source>
</evidence>
<evidence type="ECO:0000269" key="5">
    <source>
    </source>
</evidence>
<evidence type="ECO:0000269" key="6">
    <source>
    </source>
</evidence>
<evidence type="ECO:0000303" key="7">
    <source>
    </source>
</evidence>
<evidence type="ECO:0000305" key="8"/>
<evidence type="ECO:0000312" key="9">
    <source>
        <dbReference type="EMBL" id="DAA01510.1"/>
    </source>
</evidence>
<evidence type="ECO:0000312" key="10">
    <source>
        <dbReference type="Proteomes" id="UP000001940"/>
    </source>
</evidence>
<evidence type="ECO:0000312" key="11">
    <source>
        <dbReference type="WormBase" id="F32B5.8a"/>
    </source>
</evidence>
<evidence type="ECO:0000312" key="12">
    <source>
        <dbReference type="WormBase" id="F32B5.8b"/>
    </source>
</evidence>
<dbReference type="EC" id="3.4.18.1" evidence="1"/>
<dbReference type="EMBL" id="BK001409">
    <property type="protein sequence ID" value="DAA01510.1"/>
    <property type="molecule type" value="Genomic_DNA"/>
</dbReference>
<dbReference type="EMBL" id="BX284601">
    <property type="protein sequence ID" value="CCD70407.1"/>
    <property type="molecule type" value="Genomic_DNA"/>
</dbReference>
<dbReference type="EMBL" id="BX284601">
    <property type="protein sequence ID" value="CDX47496.1"/>
    <property type="molecule type" value="Genomic_DNA"/>
</dbReference>
<dbReference type="PIR" id="T29872">
    <property type="entry name" value="T29872"/>
</dbReference>
<dbReference type="RefSeq" id="NP_001293391.1">
    <property type="nucleotide sequence ID" value="NM_001306462.1"/>
</dbReference>
<dbReference type="RefSeq" id="NP_001364831.1">
    <molecule id="G5EGP8-2"/>
    <property type="nucleotide sequence ID" value="NM_001377810.2"/>
</dbReference>
<dbReference type="RefSeq" id="NP_491023.2">
    <molecule id="G5EGP8-1"/>
    <property type="nucleotide sequence ID" value="NM_058622.7"/>
</dbReference>
<dbReference type="SMR" id="G5EGP8"/>
<dbReference type="FunCoup" id="G5EGP8">
    <property type="interactions" value="275"/>
</dbReference>
<dbReference type="IntAct" id="G5EGP8">
    <property type="interactions" value="1"/>
</dbReference>
<dbReference type="STRING" id="6239.F32B5.8a.1"/>
<dbReference type="MEROPS" id="C01.A38"/>
<dbReference type="GlyCosmos" id="G5EGP8">
    <property type="glycosylation" value="1 site, No reported glycans"/>
</dbReference>
<dbReference type="PaxDb" id="6239-F32B5.8"/>
<dbReference type="PeptideAtlas" id="G5EGP8"/>
<dbReference type="EnsemblMetazoa" id="F32B5.8a.1">
    <molecule id="G5EGP8-1"/>
    <property type="protein sequence ID" value="F32B5.8a.1"/>
    <property type="gene ID" value="WBGene00000788"/>
</dbReference>
<dbReference type="EnsemblMetazoa" id="F32B5.8b.1">
    <molecule id="G5EGP8-2"/>
    <property type="protein sequence ID" value="F32B5.8b.1"/>
    <property type="gene ID" value="WBGene00000788"/>
</dbReference>
<dbReference type="GeneID" id="171829"/>
<dbReference type="KEGG" id="cel:CELE_F32B5.8"/>
<dbReference type="AGR" id="WB:WBGene00000788"/>
<dbReference type="CTD" id="171829"/>
<dbReference type="WormBase" id="F32B5.8a">
    <molecule id="G5EGP8-1"/>
    <property type="protein sequence ID" value="CE36646"/>
    <property type="gene ID" value="WBGene00000788"/>
    <property type="gene designation" value="cpz-1"/>
</dbReference>
<dbReference type="WormBase" id="F32B5.8b">
    <molecule id="G5EGP8-2"/>
    <property type="protein sequence ID" value="CE50019"/>
    <property type="gene ID" value="WBGene00000788"/>
    <property type="gene designation" value="cpz-1"/>
</dbReference>
<dbReference type="eggNOG" id="KOG1543">
    <property type="taxonomic scope" value="Eukaryota"/>
</dbReference>
<dbReference type="GeneTree" id="ENSGT00990000209842"/>
<dbReference type="InParanoid" id="G5EGP8"/>
<dbReference type="OMA" id="LYSEYHE"/>
<dbReference type="OrthoDB" id="190265at2759"/>
<dbReference type="PhylomeDB" id="G5EGP8"/>
<dbReference type="Reactome" id="R-CEL-2022377">
    <property type="pathway name" value="Metabolism of Angiotensinogen to Angiotensins"/>
</dbReference>
<dbReference type="Reactome" id="R-CEL-204005">
    <property type="pathway name" value="COPII-mediated vesicle transport"/>
</dbReference>
<dbReference type="Reactome" id="R-CEL-432720">
    <property type="pathway name" value="Lysosome Vesicle Biogenesis"/>
</dbReference>
<dbReference type="Reactome" id="R-CEL-5694530">
    <property type="pathway name" value="Cargo concentration in the ER"/>
</dbReference>
<dbReference type="Reactome" id="R-CEL-6798695">
    <property type="pathway name" value="Neutrophil degranulation"/>
</dbReference>
<dbReference type="PRO" id="PR:G5EGP8"/>
<dbReference type="Proteomes" id="UP000001940">
    <property type="component" value="Chromosome I"/>
</dbReference>
<dbReference type="Bgee" id="WBGene00000788">
    <property type="expression patterns" value="Expressed in adult organism and 4 other cell types or tissues"/>
</dbReference>
<dbReference type="GO" id="GO:0060102">
    <property type="term" value="C:cuticular extracellular matrix"/>
    <property type="evidence" value="ECO:0000314"/>
    <property type="project" value="WormBase"/>
</dbReference>
<dbReference type="GO" id="GO:0005615">
    <property type="term" value="C:extracellular space"/>
    <property type="evidence" value="ECO:0000314"/>
    <property type="project" value="UniProtKB"/>
</dbReference>
<dbReference type="GO" id="GO:0005764">
    <property type="term" value="C:lysosome"/>
    <property type="evidence" value="ECO:0000318"/>
    <property type="project" value="GO_Central"/>
</dbReference>
<dbReference type="GO" id="GO:0042718">
    <property type="term" value="C:yolk granule"/>
    <property type="evidence" value="ECO:0000314"/>
    <property type="project" value="UniProtKB"/>
</dbReference>
<dbReference type="GO" id="GO:0016807">
    <property type="term" value="F:cysteine-type carboxypeptidase activity"/>
    <property type="evidence" value="ECO:0007669"/>
    <property type="project" value="UniProtKB-EC"/>
</dbReference>
<dbReference type="GO" id="GO:0004197">
    <property type="term" value="F:cysteine-type endopeptidase activity"/>
    <property type="evidence" value="ECO:0000318"/>
    <property type="project" value="GO_Central"/>
</dbReference>
<dbReference type="GO" id="GO:0042395">
    <property type="term" value="P:ecdysis, collagen and cuticulin-based cuticle"/>
    <property type="evidence" value="ECO:0000315"/>
    <property type="project" value="WormBase"/>
</dbReference>
<dbReference type="GO" id="GO:0009792">
    <property type="term" value="P:embryo development ending in birth or egg hatching"/>
    <property type="evidence" value="ECO:0000315"/>
    <property type="project" value="WormBase"/>
</dbReference>
<dbReference type="GO" id="GO:0035262">
    <property type="term" value="P:gonad morphogenesis"/>
    <property type="evidence" value="ECO:0000315"/>
    <property type="project" value="WormBase"/>
</dbReference>
<dbReference type="GO" id="GO:0040032">
    <property type="term" value="P:post-embryonic body morphogenesis"/>
    <property type="evidence" value="ECO:0000315"/>
    <property type="project" value="WormBase"/>
</dbReference>
<dbReference type="GO" id="GO:0051603">
    <property type="term" value="P:proteolysis involved in protein catabolic process"/>
    <property type="evidence" value="ECO:0000318"/>
    <property type="project" value="GO_Central"/>
</dbReference>
<dbReference type="GO" id="GO:0040025">
    <property type="term" value="P:vulval development"/>
    <property type="evidence" value="ECO:0000315"/>
    <property type="project" value="WormBase"/>
</dbReference>
<dbReference type="CDD" id="cd02698">
    <property type="entry name" value="Peptidase_C1A_CathepsinX"/>
    <property type="match status" value="1"/>
</dbReference>
<dbReference type="FunFam" id="3.90.70.10:FF:000060">
    <property type="entry name" value="Cathepsin Z"/>
    <property type="match status" value="1"/>
</dbReference>
<dbReference type="Gene3D" id="3.90.70.10">
    <property type="entry name" value="Cysteine proteinases"/>
    <property type="match status" value="1"/>
</dbReference>
<dbReference type="InterPro" id="IPR033157">
    <property type="entry name" value="CTSZ"/>
</dbReference>
<dbReference type="InterPro" id="IPR038765">
    <property type="entry name" value="Papain-like_cys_pep_sf"/>
</dbReference>
<dbReference type="InterPro" id="IPR025661">
    <property type="entry name" value="Pept_asp_AS"/>
</dbReference>
<dbReference type="InterPro" id="IPR013128">
    <property type="entry name" value="Peptidase_C1A"/>
</dbReference>
<dbReference type="InterPro" id="IPR000668">
    <property type="entry name" value="Peptidase_C1A_C"/>
</dbReference>
<dbReference type="PANTHER" id="PTHR12411">
    <property type="entry name" value="CYSTEINE PROTEASE FAMILY C1-RELATED"/>
    <property type="match status" value="1"/>
</dbReference>
<dbReference type="Pfam" id="PF00112">
    <property type="entry name" value="Peptidase_C1"/>
    <property type="match status" value="1"/>
</dbReference>
<dbReference type="PRINTS" id="PR00705">
    <property type="entry name" value="PAPAIN"/>
</dbReference>
<dbReference type="SMART" id="SM00645">
    <property type="entry name" value="Pept_C1"/>
    <property type="match status" value="1"/>
</dbReference>
<dbReference type="SUPFAM" id="SSF54001">
    <property type="entry name" value="Cysteine proteinases"/>
    <property type="match status" value="1"/>
</dbReference>
<dbReference type="PROSITE" id="PS00640">
    <property type="entry name" value="THIOL_PROTEASE_ASN"/>
    <property type="match status" value="1"/>
</dbReference>
<gene>
    <name evidence="7 11" type="primary">cpz-1</name>
    <name evidence="11" type="ORF">F32B5.8</name>
</gene>
<protein>
    <recommendedName>
        <fullName evidence="7 11">Cathepsin Z-1</fullName>
        <ecNumber evidence="1">3.4.18.1</ecNumber>
    </recommendedName>
</protein>
<keyword id="KW-0025">Alternative splicing</keyword>
<keyword id="KW-1015">Disulfide bond</keyword>
<keyword id="KW-0325">Glycoprotein</keyword>
<keyword id="KW-0378">Hydrolase</keyword>
<keyword id="KW-0645">Protease</keyword>
<keyword id="KW-1185">Reference proteome</keyword>
<keyword id="KW-0964">Secreted</keyword>
<keyword id="KW-0732">Signal</keyword>
<keyword id="KW-0788">Thiol protease</keyword>
<keyword id="KW-0865">Zymogen</keyword>
<sequence length="306" mass="34741">MRTFVLLLALCAICILASSAYGKVRKYSNRNRYNLKGCYKQTGRVFEHKRYDRIYETEDFDSEDLPKTWDWRDANGINYASADRNQHIPQYCGSCWAFGATSALADRINIKRKNAWPQAYLSVQEVIDCSGAGTCVMGGEPGGVYKYAHEHGIPHETCNNYQARDGKCDPYNRCGSCWPGECFSIKNYTLYKVSEYGTVHGYEKMKAEIYHKGPIACGIAATKAFETYAGGIYKEVTDEDIDHIISVHGWGVDHESGVEYWIGRNSWGEPWGEHGWFKIVTSQYKNAGSKYNLKIEEDCVWADPIV</sequence>
<comment type="function">
    <text evidence="1 5">Exhibits carboxy-monopeptidase as well as carboxy-dipeptidase activity (By similarity). Plays an essential role in molting, a process during larval stages in which a new cuticle is formed and the old cuticle is shed (PubMed:14630920). Probably, required for the degradation of the old cuticle (PubMed:14630920).</text>
</comment>
<comment type="catalytic activity">
    <reaction evidence="1">
        <text>Release of C-terminal amino acid residues with broad specificity, but lacks action on C-terminal proline. Shows weak endopeptidase activity.</text>
        <dbReference type="EC" id="3.4.18.1"/>
    </reaction>
</comment>
<comment type="activity regulation">
    <text evidence="1">The disulfide bridge formed between Cys-38 in the propeptide and the active site residue Cys-95 may prevent activation of the zymogen through formation of a reversible covalent bond with the active site residue.</text>
</comment>
<comment type="subcellular location">
    <subcellularLocation>
        <location evidence="5 6">Secreted</location>
    </subcellularLocation>
    <subcellularLocation>
        <location evidence="6">Cytoplasmic granule</location>
    </subcellularLocation>
    <text evidence="5 6">In molting larvae, localizes in both the new and old cuticles, specifically at the interface where the old cuticle is being degraded before ecdysis (PubMed:14630920). Localizes to yolk granules in the developing oocyte (PubMed:16857685).</text>
</comment>
<comment type="alternative products">
    <event type="alternative splicing"/>
    <isoform>
        <id>G5EGP8-1</id>
        <name evidence="11">a</name>
        <sequence type="displayed"/>
    </isoform>
    <isoform>
        <id>G5EGP8-2</id>
        <name evidence="12">b</name>
        <sequence type="described" ref="VSP_060183"/>
    </isoform>
</comment>
<comment type="tissue specificity">
    <text evidence="5 6">Expressed in hypodermis, cuticle and pharynx (at protein level) (PubMed:14630920, PubMed:16857685). Expressed in germ cells, developing oocytes, sheath cells surrounding germ cells and oocytes, and in the eggshell (at protein level) (PubMed:16857685). Not expressed in sperm (PubMed:16857685).</text>
</comment>
<comment type="developmental stage">
    <text evidence="5 6">Expressed in embryos, larvae and adults (at protein level) (PubMed:14630920, PubMed:16857685). In larvae, only expressed in hypodermis and cuticle (at protein level) (PubMed:14630920, PubMed:16857685). Expressed in the ecdysed cuticle during molting (at protein level) (PubMed:16857685). Expression transiently increases during early embryonic stages and prior to the larval L2/L3, L3/L4 and L4/adult molts (PubMed:14630920, PubMed:16857685).</text>
</comment>
<comment type="disruption phenotype">
    <text evidence="5">RNAi-mediated knockdown causes an arrest at the 50-cell embryonic stage. The few surviving animals are arrested at the larval L2 to L3 molt with their cuticle remaining attached to the mid-portion of the body. RNAi-mediated knockdown at various larval stages causes severe defects in molting.</text>
</comment>
<comment type="similarity">
    <text evidence="2 4">Belongs to the peptidase C1 family.</text>
</comment>
<accession>G5EGP8</accession>
<accession>A0A078BPL2</accession>
<reference evidence="9" key="1">
    <citation type="journal article" date="2004" name="J. Biol. Chem.">
        <title>The Caenorhabditis elegans cathepsin Z-like cysteine protease, Ce-CPZ-1, has a multifunctional role during the worms' development.</title>
        <authorList>
            <person name="Hashmi S."/>
            <person name="Zhang J."/>
            <person name="Oksov Y."/>
            <person name="Lustigman S."/>
        </authorList>
    </citation>
    <scope>NUCLEOTIDE SEQUENCE [GENOMIC DNA]</scope>
    <scope>FUNCTION</scope>
    <scope>SUBCELLULAR LOCATION</scope>
    <scope>TISSUE SPECIFICITY</scope>
    <scope>DEVELOPMENTAL STAGE</scope>
    <scope>DISRUPTION PHENOTYPE</scope>
</reference>
<reference evidence="10" key="2">
    <citation type="journal article" date="1998" name="Science">
        <title>Genome sequence of the nematode C. elegans: a platform for investigating biology.</title>
        <authorList>
            <consortium name="The C. elegans sequencing consortium"/>
        </authorList>
    </citation>
    <scope>NUCLEOTIDE SEQUENCE [LARGE SCALE GENOMIC DNA]</scope>
    <source>
        <strain evidence="10">Bristol N2</strain>
    </source>
</reference>
<reference evidence="8" key="3">
    <citation type="journal article" date="2006" name="J. Biol. Chem.">
        <title>The Caenorhabditis elegans CPI-2a cystatin-like inhibitor has an essential regulatory role during oogenesis and fertilization.</title>
        <authorList>
            <person name="Hashmi S."/>
            <person name="Zhang J."/>
            <person name="Oksov Y."/>
            <person name="Ji Q."/>
            <person name="Lustigman S."/>
        </authorList>
    </citation>
    <scope>SUBCELLULAR LOCATION</scope>
    <scope>TISSUE SPECIFICITY</scope>
    <scope>DEVELOPMENTAL STAGE</scope>
</reference>
<proteinExistence type="evidence at protein level"/>